<organism>
    <name type="scientific">Bombyx mori</name>
    <name type="common">Silk moth</name>
    <dbReference type="NCBI Taxonomy" id="7091"/>
    <lineage>
        <taxon>Eukaryota</taxon>
        <taxon>Metazoa</taxon>
        <taxon>Ecdysozoa</taxon>
        <taxon>Arthropoda</taxon>
        <taxon>Hexapoda</taxon>
        <taxon>Insecta</taxon>
        <taxon>Pterygota</taxon>
        <taxon>Neoptera</taxon>
        <taxon>Endopterygota</taxon>
        <taxon>Lepidoptera</taxon>
        <taxon>Glossata</taxon>
        <taxon>Ditrysia</taxon>
        <taxon>Bombycoidea</taxon>
        <taxon>Bombycidae</taxon>
        <taxon>Bombycinae</taxon>
        <taxon>Bombyx</taxon>
    </lineage>
</organism>
<comment type="function">
    <text evidence="2 3">Sulfurates the molybdenum cofactor. Sulfation of molybdenum is essential for xanthine dehydrogenase (XDH) and aldehyde oxidase (ADO) enzymes in which molybdenum cofactor is liganded by 1 oxygen and 1 sulfur atom in active form.</text>
</comment>
<comment type="catalytic activity">
    <reaction evidence="2">
        <text>Mo-molybdopterin + L-cysteine + AH2 = thio-Mo-molybdopterin + L-alanine + A + H2O</text>
        <dbReference type="Rhea" id="RHEA:42636"/>
        <dbReference type="ChEBI" id="CHEBI:13193"/>
        <dbReference type="ChEBI" id="CHEBI:15377"/>
        <dbReference type="ChEBI" id="CHEBI:17499"/>
        <dbReference type="ChEBI" id="CHEBI:35235"/>
        <dbReference type="ChEBI" id="CHEBI:57972"/>
        <dbReference type="ChEBI" id="CHEBI:71302"/>
        <dbReference type="ChEBI" id="CHEBI:82685"/>
        <dbReference type="EC" id="2.8.1.9"/>
    </reaction>
</comment>
<comment type="cofactor">
    <cofactor evidence="2">
        <name>pyridoxal 5'-phosphate</name>
        <dbReference type="ChEBI" id="CHEBI:597326"/>
    </cofactor>
</comment>
<comment type="pathway">
    <text evidence="1">Cofactor biosynthesis; molybdopterin biosynthesis.</text>
</comment>
<comment type="developmental stage">
    <text>Expressed in larvae.</text>
</comment>
<comment type="disruption phenotype">
    <text evidence="3">Silk moth larvae are transluscent due to the absence of XDH activity and are thereby unable to synthesize uric acid.</text>
</comment>
<comment type="miscellaneous">
    <text>Was named 'Organdy' because of the color of the translucid skin.</text>
</comment>
<comment type="similarity">
    <text evidence="2">Belongs to the class-V pyridoxal-phosphate-dependent aminotransferase family. MOCOS subfamily.</text>
</comment>
<evidence type="ECO:0000250" key="1">
    <source>
        <dbReference type="UniProtKB" id="Q96EN8"/>
    </source>
</evidence>
<evidence type="ECO:0000255" key="2">
    <source>
        <dbReference type="HAMAP-Rule" id="MF_03050"/>
    </source>
</evidence>
<evidence type="ECO:0000269" key="3">
    <source>
    </source>
</evidence>
<protein>
    <recommendedName>
        <fullName evidence="2">Molybdenum cofactor sulfurase</fullName>
        <shortName evidence="2">MCS</shortName>
        <shortName evidence="2">MOS</shortName>
        <shortName evidence="2">MoCo sulfurase</shortName>
        <ecNumber evidence="2">2.8.1.9</ecNumber>
    </recommendedName>
    <alternativeName>
        <fullName evidence="2">Molybdenum cofactor sulfurtransferase</fullName>
    </alternativeName>
    <alternativeName>
        <fullName evidence="2">Protein maroon-like</fullName>
        <shortName evidence="2">Ma-l</shortName>
    </alternativeName>
    <alternativeName>
        <fullName>Protein organdy</fullName>
    </alternativeName>
</protein>
<sequence length="822" mass="94082">MTVLSQIIKPDDMIKITSEFARLGDRCYLDNAGATLYPKSLITSINEDLLKNVYMNPHTDKNTKDYIEQIRCLILKHFNTDPSTYTLIFTSGTTQALKLVIESFQFMKNEDDDLNCGSFVYLEDNHTSVVGLRELAVDKDAEVVHIAHEDFLNVINTKAKQTSKYTNGGNCLVAYPAQSNFNGFKYPLNCIENIKNGCLNNHLKKHLCEINSDWYVLLDAAAYVATSKLDLAKVQPDFVSLSFYKIFGFPTGLGALLVKKSSENVLSQKRYFGGGTVDALLSNEHYHIKREIFHERFEDGSLSFLSIISLKQCLDTMYRIIPRIIHDDIMETISYHTFYLAKDLYCQLLDLRHRNGTKAIKFYLDSDFSDITKQGGVLTFNLVREDGTYIGFSEFQHMADLFNISVRTGCFCNSGSCQRHLHMSNKDMKDMYNAGHRCGDEVDLINEKPTGAIRISFGYYNTFEDVDKFVNMICRCFVNAKARKQKRIINHFVETPKIKHYNGNVNKIINEQIYFKNVDDVLINIPPMSTKIILKEICIFPIKSCGAFKILSGWNIGPKGFEYDREWMIVKDNGVCLTQKQNTRMCMIRPQIDLKQKVMILNFPGKTPISIPLENSINEVQKNGSLCHSKVCTDMIKGIDCGDEVADWISEALEVSFLRLIRQSSNDNRSLKKKKDEDKKLLSLSNQAQYLLINKATVKWLSEKIKDPLFTDDLNHLTDRFRGNLIIEMEQELLEREWHSVIIGNHEFKVEGQCPRCQMVCIDQQTGEKTVEPLRTIAEQFGGKLRFGIYLSYVGTVNKSDDRTLKTYSPIKAILNDDNISR</sequence>
<dbReference type="EC" id="2.8.1.9" evidence="2"/>
<dbReference type="EMBL" id="AB090243">
    <property type="protein sequence ID" value="BAC22952.1"/>
    <property type="molecule type" value="Genomic_DNA"/>
</dbReference>
<dbReference type="RefSeq" id="NP_001106746.1">
    <property type="nucleotide sequence ID" value="NM_001113275.1"/>
</dbReference>
<dbReference type="SMR" id="Q8IU29"/>
<dbReference type="FunCoup" id="Q8IU29">
    <property type="interactions" value="123"/>
</dbReference>
<dbReference type="STRING" id="7091.Q8IU29"/>
<dbReference type="EnsemblMetazoa" id="NM_001113275.1">
    <property type="protein sequence ID" value="NP_001106746.1"/>
    <property type="gene ID" value="GeneID_100134930"/>
</dbReference>
<dbReference type="GeneID" id="100134930"/>
<dbReference type="KEGG" id="bmor:100134930"/>
<dbReference type="CTD" id="4118"/>
<dbReference type="eggNOG" id="KOG2142">
    <property type="taxonomic scope" value="Eukaryota"/>
</dbReference>
<dbReference type="InParanoid" id="Q8IU29"/>
<dbReference type="UniPathway" id="UPA00344"/>
<dbReference type="Proteomes" id="UP000005204">
    <property type="component" value="Unassembled WGS sequence"/>
</dbReference>
<dbReference type="GO" id="GO:0016829">
    <property type="term" value="F:lyase activity"/>
    <property type="evidence" value="ECO:0007669"/>
    <property type="project" value="UniProtKB-UniRule"/>
</dbReference>
<dbReference type="GO" id="GO:0008265">
    <property type="term" value="F:molybdenum cofactor sulfurtransferase activity"/>
    <property type="evidence" value="ECO:0000250"/>
    <property type="project" value="UniProtKB"/>
</dbReference>
<dbReference type="GO" id="GO:0030151">
    <property type="term" value="F:molybdenum ion binding"/>
    <property type="evidence" value="ECO:0007669"/>
    <property type="project" value="UniProtKB-UniRule"/>
</dbReference>
<dbReference type="GO" id="GO:0030170">
    <property type="term" value="F:pyridoxal phosphate binding"/>
    <property type="evidence" value="ECO:0007669"/>
    <property type="project" value="UniProtKB-UniRule"/>
</dbReference>
<dbReference type="GO" id="GO:0006777">
    <property type="term" value="P:Mo-molybdopterin cofactor biosynthetic process"/>
    <property type="evidence" value="ECO:0007669"/>
    <property type="project" value="UniProtKB-UniRule"/>
</dbReference>
<dbReference type="GO" id="GO:0043545">
    <property type="term" value="P:molybdopterin cofactor metabolic process"/>
    <property type="evidence" value="ECO:0000250"/>
    <property type="project" value="UniProtKB"/>
</dbReference>
<dbReference type="FunFam" id="3.40.640.10:FF:000119">
    <property type="entry name" value="Molybdenum cofactor sulfurase"/>
    <property type="match status" value="1"/>
</dbReference>
<dbReference type="FunFam" id="3.90.1150.10:FF:000079">
    <property type="entry name" value="Molybdenum cofactor sulfurase"/>
    <property type="match status" value="1"/>
</dbReference>
<dbReference type="Gene3D" id="3.90.1150.10">
    <property type="entry name" value="Aspartate Aminotransferase, domain 1"/>
    <property type="match status" value="1"/>
</dbReference>
<dbReference type="Gene3D" id="3.40.640.10">
    <property type="entry name" value="Type I PLP-dependent aspartate aminotransferase-like (Major domain)"/>
    <property type="match status" value="1"/>
</dbReference>
<dbReference type="HAMAP" id="MF_03050">
    <property type="entry name" value="MOCOS"/>
    <property type="match status" value="1"/>
</dbReference>
<dbReference type="InterPro" id="IPR000192">
    <property type="entry name" value="Aminotrans_V_dom"/>
</dbReference>
<dbReference type="InterPro" id="IPR005302">
    <property type="entry name" value="MoCF_Sase_C"/>
</dbReference>
<dbReference type="InterPro" id="IPR028886">
    <property type="entry name" value="MoCo_sulfurase"/>
</dbReference>
<dbReference type="InterPro" id="IPR005303">
    <property type="entry name" value="MOCOS_middle"/>
</dbReference>
<dbReference type="InterPro" id="IPR015424">
    <property type="entry name" value="PyrdxlP-dep_Trfase"/>
</dbReference>
<dbReference type="InterPro" id="IPR015421">
    <property type="entry name" value="PyrdxlP-dep_Trfase_major"/>
</dbReference>
<dbReference type="InterPro" id="IPR015422">
    <property type="entry name" value="PyrdxlP-dep_Trfase_small"/>
</dbReference>
<dbReference type="PANTHER" id="PTHR14237:SF19">
    <property type="entry name" value="MITOCHONDRIAL AMIDOXIME REDUCING COMPONENT 1"/>
    <property type="match status" value="1"/>
</dbReference>
<dbReference type="PANTHER" id="PTHR14237">
    <property type="entry name" value="MOLYBDOPTERIN COFACTOR SULFURASE MOSC"/>
    <property type="match status" value="1"/>
</dbReference>
<dbReference type="Pfam" id="PF00266">
    <property type="entry name" value="Aminotran_5"/>
    <property type="match status" value="1"/>
</dbReference>
<dbReference type="Pfam" id="PF03473">
    <property type="entry name" value="MOSC"/>
    <property type="match status" value="1"/>
</dbReference>
<dbReference type="Pfam" id="PF03476">
    <property type="entry name" value="MOSC_N"/>
    <property type="match status" value="1"/>
</dbReference>
<dbReference type="SUPFAM" id="SSF141673">
    <property type="entry name" value="MOSC N-terminal domain-like"/>
    <property type="match status" value="1"/>
</dbReference>
<dbReference type="SUPFAM" id="SSF53383">
    <property type="entry name" value="PLP-dependent transferases"/>
    <property type="match status" value="1"/>
</dbReference>
<dbReference type="PROSITE" id="PS51340">
    <property type="entry name" value="MOSC"/>
    <property type="match status" value="1"/>
</dbReference>
<proteinExistence type="evidence at transcript level"/>
<keyword id="KW-0501">Molybdenum cofactor biosynthesis</keyword>
<keyword id="KW-0663">Pyridoxal phosphate</keyword>
<keyword id="KW-1185">Reference proteome</keyword>
<keyword id="KW-0808">Transferase</keyword>
<reference key="1">
    <citation type="journal article" date="2003" name="Insect Biochem. Mol. Biol.">
        <title>Mutations of the silkworm molybdenum cofactor sulfurase gene, og, cause translucent larval skin.</title>
        <authorList>
            <person name="Komoto N."/>
            <person name="Sezutsu H."/>
            <person name="Yukuhiro K."/>
            <person name="Banno Y."/>
            <person name="Fujii H."/>
        </authorList>
    </citation>
    <scope>NUCLEOTIDE SEQUENCE [GENOMIC DNA]</scope>
    <scope>FUNCTION</scope>
    <scope>DISRUPTION PHENOTYPE</scope>
    <source>
        <strain>C108</strain>
        <tissue>Silk gland</tissue>
    </source>
</reference>
<name>MOCOS_BOMMO</name>
<accession>Q8IU29</accession>
<gene>
    <name evidence="2" type="primary">mal</name>
    <name type="synonym">og</name>
</gene>
<feature type="chain" id="PRO_0000249955" description="Molybdenum cofactor sulfurase">
    <location>
        <begin position="1"/>
        <end position="822"/>
    </location>
</feature>
<feature type="domain" description="MOSC" evidence="2">
    <location>
        <begin position="658"/>
        <end position="814"/>
    </location>
</feature>
<feature type="active site" evidence="2">
    <location>
        <position position="412"/>
    </location>
</feature>
<feature type="modified residue" description="N6-(pyridoxal phosphate)lysine" evidence="2">
    <location>
        <position position="245"/>
    </location>
</feature>